<reference key="1">
    <citation type="journal article" date="2007" name="Proc. Natl. Acad. Sci. U.S.A.">
        <title>Genome sequencing reveals complex secondary metabolome in the marine actinomycete Salinispora tropica.</title>
        <authorList>
            <person name="Udwary D.W."/>
            <person name="Zeigler L."/>
            <person name="Asolkar R.N."/>
            <person name="Singan V."/>
            <person name="Lapidus A."/>
            <person name="Fenical W."/>
            <person name="Jensen P.R."/>
            <person name="Moore B.S."/>
        </authorList>
    </citation>
    <scope>NUCLEOTIDE SEQUENCE [LARGE SCALE GENOMIC DNA]</scope>
    <source>
        <strain>ATCC BAA-916 / DSM 44818 / JCM 13857 / NBRC 105044 / CNB-440</strain>
    </source>
</reference>
<comment type="function">
    <text evidence="1">Catalyzes the attachment of proline to tRNA(Pro) in a two-step reaction: proline is first activated by ATP to form Pro-AMP and then transferred to the acceptor end of tRNA(Pro). As ProRS can inadvertently accommodate and process non-cognate amino acids such as alanine and cysteine, to avoid such errors it has two additional distinct editing activities against alanine. One activity is designated as 'pretransfer' editing and involves the tRNA(Pro)-independent hydrolysis of activated Ala-AMP. The other activity is designated 'posttransfer' editing and involves deacylation of mischarged Ala-tRNA(Pro). The misacylated Cys-tRNA(Pro) is not edited by ProRS.</text>
</comment>
<comment type="catalytic activity">
    <reaction evidence="1">
        <text>tRNA(Pro) + L-proline + ATP = L-prolyl-tRNA(Pro) + AMP + diphosphate</text>
        <dbReference type="Rhea" id="RHEA:14305"/>
        <dbReference type="Rhea" id="RHEA-COMP:9700"/>
        <dbReference type="Rhea" id="RHEA-COMP:9702"/>
        <dbReference type="ChEBI" id="CHEBI:30616"/>
        <dbReference type="ChEBI" id="CHEBI:33019"/>
        <dbReference type="ChEBI" id="CHEBI:60039"/>
        <dbReference type="ChEBI" id="CHEBI:78442"/>
        <dbReference type="ChEBI" id="CHEBI:78532"/>
        <dbReference type="ChEBI" id="CHEBI:456215"/>
        <dbReference type="EC" id="6.1.1.15"/>
    </reaction>
</comment>
<comment type="subunit">
    <text evidence="1">Homodimer.</text>
</comment>
<comment type="subcellular location">
    <subcellularLocation>
        <location evidence="1">Cytoplasm</location>
    </subcellularLocation>
</comment>
<comment type="domain">
    <text evidence="1">Consists of three domains: the N-terminal catalytic domain, the editing domain and the C-terminal anticodon-binding domain.</text>
</comment>
<comment type="similarity">
    <text evidence="1">Belongs to the class-II aminoacyl-tRNA synthetase family. ProS type 1 subfamily.</text>
</comment>
<protein>
    <recommendedName>
        <fullName evidence="1">Proline--tRNA ligase</fullName>
        <ecNumber evidence="1">6.1.1.15</ecNumber>
    </recommendedName>
    <alternativeName>
        <fullName evidence="1">Prolyl-tRNA synthetase</fullName>
        <shortName evidence="1">ProRS</shortName>
    </alternativeName>
</protein>
<dbReference type="EC" id="6.1.1.15" evidence="1"/>
<dbReference type="EMBL" id="CP000667">
    <property type="protein sequence ID" value="ABP54256.1"/>
    <property type="molecule type" value="Genomic_DNA"/>
</dbReference>
<dbReference type="SMR" id="A4X5V6"/>
<dbReference type="STRING" id="369723.Strop_1793"/>
<dbReference type="KEGG" id="stp:Strop_1793"/>
<dbReference type="eggNOG" id="COG0442">
    <property type="taxonomic scope" value="Bacteria"/>
</dbReference>
<dbReference type="HOGENOM" id="CLU_016739_0_0_11"/>
<dbReference type="Proteomes" id="UP000000235">
    <property type="component" value="Chromosome"/>
</dbReference>
<dbReference type="GO" id="GO:0005829">
    <property type="term" value="C:cytosol"/>
    <property type="evidence" value="ECO:0007669"/>
    <property type="project" value="TreeGrafter"/>
</dbReference>
<dbReference type="GO" id="GO:0002161">
    <property type="term" value="F:aminoacyl-tRNA deacylase activity"/>
    <property type="evidence" value="ECO:0007669"/>
    <property type="project" value="InterPro"/>
</dbReference>
<dbReference type="GO" id="GO:0005524">
    <property type="term" value="F:ATP binding"/>
    <property type="evidence" value="ECO:0007669"/>
    <property type="project" value="UniProtKB-UniRule"/>
</dbReference>
<dbReference type="GO" id="GO:0004827">
    <property type="term" value="F:proline-tRNA ligase activity"/>
    <property type="evidence" value="ECO:0007669"/>
    <property type="project" value="UniProtKB-UniRule"/>
</dbReference>
<dbReference type="GO" id="GO:0006433">
    <property type="term" value="P:prolyl-tRNA aminoacylation"/>
    <property type="evidence" value="ECO:0007669"/>
    <property type="project" value="UniProtKB-UniRule"/>
</dbReference>
<dbReference type="CDD" id="cd04334">
    <property type="entry name" value="ProRS-INS"/>
    <property type="match status" value="1"/>
</dbReference>
<dbReference type="CDD" id="cd00861">
    <property type="entry name" value="ProRS_anticodon_short"/>
    <property type="match status" value="1"/>
</dbReference>
<dbReference type="Gene3D" id="3.40.50.800">
    <property type="entry name" value="Anticodon-binding domain"/>
    <property type="match status" value="1"/>
</dbReference>
<dbReference type="Gene3D" id="3.30.930.10">
    <property type="entry name" value="Bira Bifunctional Protein, Domain 2"/>
    <property type="match status" value="2"/>
</dbReference>
<dbReference type="HAMAP" id="MF_01569">
    <property type="entry name" value="Pro_tRNA_synth_type1"/>
    <property type="match status" value="1"/>
</dbReference>
<dbReference type="InterPro" id="IPR002314">
    <property type="entry name" value="aa-tRNA-synt_IIb"/>
</dbReference>
<dbReference type="InterPro" id="IPR006195">
    <property type="entry name" value="aa-tRNA-synth_II"/>
</dbReference>
<dbReference type="InterPro" id="IPR045864">
    <property type="entry name" value="aa-tRNA-synth_II/BPL/LPL"/>
</dbReference>
<dbReference type="InterPro" id="IPR004154">
    <property type="entry name" value="Anticodon-bd"/>
</dbReference>
<dbReference type="InterPro" id="IPR036621">
    <property type="entry name" value="Anticodon-bd_dom_sf"/>
</dbReference>
<dbReference type="InterPro" id="IPR002316">
    <property type="entry name" value="Pro-tRNA-ligase_IIa"/>
</dbReference>
<dbReference type="InterPro" id="IPR004500">
    <property type="entry name" value="Pro-tRNA-synth_IIa_bac-type"/>
</dbReference>
<dbReference type="InterPro" id="IPR023717">
    <property type="entry name" value="Pro-tRNA-Synthase_IIa_type1"/>
</dbReference>
<dbReference type="InterPro" id="IPR050062">
    <property type="entry name" value="Pro-tRNA_synthetase"/>
</dbReference>
<dbReference type="InterPro" id="IPR044140">
    <property type="entry name" value="ProRS_anticodon_short"/>
</dbReference>
<dbReference type="InterPro" id="IPR036754">
    <property type="entry name" value="YbaK/aa-tRNA-synt-asso_dom_sf"/>
</dbReference>
<dbReference type="InterPro" id="IPR007214">
    <property type="entry name" value="YbaK/aa-tRNA-synth-assoc-dom"/>
</dbReference>
<dbReference type="NCBIfam" id="NF006625">
    <property type="entry name" value="PRK09194.1"/>
    <property type="match status" value="1"/>
</dbReference>
<dbReference type="NCBIfam" id="TIGR00409">
    <property type="entry name" value="proS_fam_II"/>
    <property type="match status" value="1"/>
</dbReference>
<dbReference type="PANTHER" id="PTHR42753">
    <property type="entry name" value="MITOCHONDRIAL RIBOSOME PROTEIN L39/PROLYL-TRNA LIGASE FAMILY MEMBER"/>
    <property type="match status" value="1"/>
</dbReference>
<dbReference type="PANTHER" id="PTHR42753:SF2">
    <property type="entry name" value="PROLINE--TRNA LIGASE"/>
    <property type="match status" value="1"/>
</dbReference>
<dbReference type="Pfam" id="PF03129">
    <property type="entry name" value="HGTP_anticodon"/>
    <property type="match status" value="1"/>
</dbReference>
<dbReference type="Pfam" id="PF00587">
    <property type="entry name" value="tRNA-synt_2b"/>
    <property type="match status" value="1"/>
</dbReference>
<dbReference type="Pfam" id="PF04073">
    <property type="entry name" value="tRNA_edit"/>
    <property type="match status" value="1"/>
</dbReference>
<dbReference type="PRINTS" id="PR01046">
    <property type="entry name" value="TRNASYNTHPRO"/>
</dbReference>
<dbReference type="SUPFAM" id="SSF52954">
    <property type="entry name" value="Class II aaRS ABD-related"/>
    <property type="match status" value="1"/>
</dbReference>
<dbReference type="SUPFAM" id="SSF55681">
    <property type="entry name" value="Class II aaRS and biotin synthetases"/>
    <property type="match status" value="1"/>
</dbReference>
<dbReference type="SUPFAM" id="SSF55826">
    <property type="entry name" value="YbaK/ProRS associated domain"/>
    <property type="match status" value="1"/>
</dbReference>
<dbReference type="PROSITE" id="PS50862">
    <property type="entry name" value="AA_TRNA_LIGASE_II"/>
    <property type="match status" value="1"/>
</dbReference>
<sequence length="595" mass="64340">MKMSTMFGATLHTAPGRSESEGHQLLQRAAMLRQVGQGIFAYLPLGWRTIRKIEAVLRAELERVGGQEVSMPVVNPAELWKQTGRYFTIGPELARFRDRRGRDLVLAMTHEELVTFLGRSEIESYRHLPRMVFQLQTKFRDDPRPRAGLIRVREFVMKDAYSFDVDAAGLAARYRAQYQAYLTIFRRCGLPVAAVLSDVGMMGGSLAHEFVYLTPIGEDTLLICDSCGFAANREAATFGKPAPSTAPWAELAEIATPGATTIEALTAALGVPAAETAKAIFLAASREDRDQTVDTEFILAVVRGDMEANETKIGNLVQAAELRPMTVEEISKIGAVAGYGSPVGVTGVTVVVDELVAASTNLVAGANREGMHLRNVNVGRDFVADHTGDITAARAGDACAECGSELRTARGVEVGQIFKLGTRYSTALGAEYLDADGQRKPLTMGCYGIGVGRLLACLAEEHRDERGLRLPVTIAPYQVHLTLLDDLASAAGELARRVYDELWAAGVEVLFDDRDERAGVKFADADVIGLPLRVTIGRRSVANGAAEVRDRATGVTAQVPFDEVVAELVRRIAALRADIDATVVPVELPAEVFAP</sequence>
<organism>
    <name type="scientific">Salinispora tropica (strain ATCC BAA-916 / DSM 44818 / JCM 13857 / NBRC 105044 / CNB-440)</name>
    <dbReference type="NCBI Taxonomy" id="369723"/>
    <lineage>
        <taxon>Bacteria</taxon>
        <taxon>Bacillati</taxon>
        <taxon>Actinomycetota</taxon>
        <taxon>Actinomycetes</taxon>
        <taxon>Micromonosporales</taxon>
        <taxon>Micromonosporaceae</taxon>
        <taxon>Salinispora</taxon>
    </lineage>
</organism>
<feature type="chain" id="PRO_1000087852" description="Proline--tRNA ligase">
    <location>
        <begin position="1"/>
        <end position="595"/>
    </location>
</feature>
<feature type="region of interest" description="Disordered" evidence="2">
    <location>
        <begin position="1"/>
        <end position="22"/>
    </location>
</feature>
<proteinExistence type="inferred from homology"/>
<accession>A4X5V6</accession>
<gene>
    <name evidence="1" type="primary">proS</name>
    <name type="ordered locus">Strop_1793</name>
</gene>
<evidence type="ECO:0000255" key="1">
    <source>
        <dbReference type="HAMAP-Rule" id="MF_01569"/>
    </source>
</evidence>
<evidence type="ECO:0000256" key="2">
    <source>
        <dbReference type="SAM" id="MobiDB-lite"/>
    </source>
</evidence>
<keyword id="KW-0030">Aminoacyl-tRNA synthetase</keyword>
<keyword id="KW-0067">ATP-binding</keyword>
<keyword id="KW-0963">Cytoplasm</keyword>
<keyword id="KW-0436">Ligase</keyword>
<keyword id="KW-0547">Nucleotide-binding</keyword>
<keyword id="KW-0648">Protein biosynthesis</keyword>
<keyword id="KW-1185">Reference proteome</keyword>
<name>SYP_SALTO</name>